<evidence type="ECO:0000250" key="1"/>
<evidence type="ECO:0000250" key="2">
    <source>
        <dbReference type="UniProtKB" id="P36106"/>
    </source>
</evidence>
<evidence type="ECO:0000255" key="3">
    <source>
        <dbReference type="PROSITE-ProRule" id="PRU00146"/>
    </source>
</evidence>
<evidence type="ECO:0000255" key="4">
    <source>
        <dbReference type="PROSITE-ProRule" id="PRU00651"/>
    </source>
</evidence>
<evidence type="ECO:0000256" key="5">
    <source>
        <dbReference type="SAM" id="MobiDB-lite"/>
    </source>
</evidence>
<evidence type="ECO:0000305" key="6"/>
<dbReference type="EMBL" id="AAFW02000152">
    <property type="protein sequence ID" value="EDN59904.1"/>
    <property type="molecule type" value="Genomic_DNA"/>
</dbReference>
<dbReference type="SMR" id="A6ZZW1"/>
<dbReference type="HOGENOM" id="CLU_495285_0_0_1"/>
<dbReference type="OrthoDB" id="40741at4893"/>
<dbReference type="Proteomes" id="UP000007060">
    <property type="component" value="Unassembled WGS sequence"/>
</dbReference>
<dbReference type="GO" id="GO:0005634">
    <property type="term" value="C:nucleus"/>
    <property type="evidence" value="ECO:0007669"/>
    <property type="project" value="UniProtKB-SubCell"/>
</dbReference>
<dbReference type="GO" id="GO:0000977">
    <property type="term" value="F:RNA polymerase II transcription regulatory region sequence-specific DNA binding"/>
    <property type="evidence" value="ECO:0007669"/>
    <property type="project" value="TreeGrafter"/>
</dbReference>
<dbReference type="GO" id="GO:0008270">
    <property type="term" value="F:zinc ion binding"/>
    <property type="evidence" value="ECO:0007669"/>
    <property type="project" value="UniProtKB-KW"/>
</dbReference>
<dbReference type="GO" id="GO:0006351">
    <property type="term" value="P:DNA-templated transcription"/>
    <property type="evidence" value="ECO:0007669"/>
    <property type="project" value="InterPro"/>
</dbReference>
<dbReference type="CDD" id="cd15570">
    <property type="entry name" value="PHD_Bye1p_SIZ1_like"/>
    <property type="match status" value="1"/>
</dbReference>
<dbReference type="CDD" id="cd21542">
    <property type="entry name" value="SPOC_Bye1p-like"/>
    <property type="match status" value="1"/>
</dbReference>
<dbReference type="Gene3D" id="1.10.472.30">
    <property type="entry name" value="Transcription elongation factor S-II, central domain"/>
    <property type="match status" value="1"/>
</dbReference>
<dbReference type="Gene3D" id="3.30.40.10">
    <property type="entry name" value="Zinc/RING finger domain, C3HC4 (zinc finger)"/>
    <property type="match status" value="1"/>
</dbReference>
<dbReference type="InterPro" id="IPR012921">
    <property type="entry name" value="SPOC_C"/>
</dbReference>
<dbReference type="InterPro" id="IPR003618">
    <property type="entry name" value="TFIIS_cen_dom"/>
</dbReference>
<dbReference type="InterPro" id="IPR036575">
    <property type="entry name" value="TFIIS_cen_dom_sf"/>
</dbReference>
<dbReference type="InterPro" id="IPR019786">
    <property type="entry name" value="Zinc_finger_PHD-type_CS"/>
</dbReference>
<dbReference type="InterPro" id="IPR011011">
    <property type="entry name" value="Znf_FYVE_PHD"/>
</dbReference>
<dbReference type="InterPro" id="IPR001965">
    <property type="entry name" value="Znf_PHD"/>
</dbReference>
<dbReference type="InterPro" id="IPR019787">
    <property type="entry name" value="Znf_PHD-finger"/>
</dbReference>
<dbReference type="InterPro" id="IPR013083">
    <property type="entry name" value="Znf_RING/FYVE/PHD"/>
</dbReference>
<dbReference type="PANTHER" id="PTHR11477:SF0">
    <property type="entry name" value="IP08861P-RELATED"/>
    <property type="match status" value="1"/>
</dbReference>
<dbReference type="PANTHER" id="PTHR11477">
    <property type="entry name" value="TRANSCRIPTION FACTOR S-II ZINC FINGER DOMAIN-CONTAINING PROTEIN"/>
    <property type="match status" value="1"/>
</dbReference>
<dbReference type="Pfam" id="PF00628">
    <property type="entry name" value="PHD"/>
    <property type="match status" value="1"/>
</dbReference>
<dbReference type="Pfam" id="PF07744">
    <property type="entry name" value="SPOC"/>
    <property type="match status" value="1"/>
</dbReference>
<dbReference type="Pfam" id="PF07500">
    <property type="entry name" value="TFIIS_M"/>
    <property type="match status" value="1"/>
</dbReference>
<dbReference type="SMART" id="SM00249">
    <property type="entry name" value="PHD"/>
    <property type="match status" value="1"/>
</dbReference>
<dbReference type="SMART" id="SM00510">
    <property type="entry name" value="TFS2M"/>
    <property type="match status" value="1"/>
</dbReference>
<dbReference type="SUPFAM" id="SSF46942">
    <property type="entry name" value="Elongation factor TFIIS domain 2"/>
    <property type="match status" value="1"/>
</dbReference>
<dbReference type="SUPFAM" id="SSF57903">
    <property type="entry name" value="FYVE/PHD zinc finger"/>
    <property type="match status" value="1"/>
</dbReference>
<dbReference type="PROSITE" id="PS51321">
    <property type="entry name" value="TFIIS_CENTRAL"/>
    <property type="match status" value="1"/>
</dbReference>
<dbReference type="PROSITE" id="PS01359">
    <property type="entry name" value="ZF_PHD_1"/>
    <property type="match status" value="1"/>
</dbReference>
<dbReference type="PROSITE" id="PS50016">
    <property type="entry name" value="ZF_PHD_2"/>
    <property type="match status" value="1"/>
</dbReference>
<protein>
    <recommendedName>
        <fullName>Transcription factor BYE1</fullName>
    </recommendedName>
    <alternativeName>
        <fullName>Bypass of ESS1 protein 1</fullName>
    </alternativeName>
</protein>
<proteinExistence type="inferred from homology"/>
<gene>
    <name type="primary">BYE1</name>
    <name type="ORF">SCY_3371</name>
</gene>
<feature type="chain" id="PRO_0000324852" description="Transcription factor BYE1">
    <location>
        <begin position="1"/>
        <end position="594"/>
    </location>
</feature>
<feature type="domain" description="TFIIS central" evidence="4">
    <location>
        <begin position="254"/>
        <end position="365"/>
    </location>
</feature>
<feature type="zinc finger region" description="PHD-type" evidence="3">
    <location>
        <begin position="72"/>
        <end position="134"/>
    </location>
</feature>
<feature type="region of interest" description="Disordered" evidence="5">
    <location>
        <begin position="1"/>
        <end position="65"/>
    </location>
</feature>
<feature type="region of interest" description="Disordered" evidence="5">
    <location>
        <begin position="142"/>
        <end position="231"/>
    </location>
</feature>
<feature type="compositionally biased region" description="Polar residues" evidence="5">
    <location>
        <begin position="1"/>
        <end position="13"/>
    </location>
</feature>
<feature type="compositionally biased region" description="Basic and acidic residues" evidence="5">
    <location>
        <begin position="36"/>
        <end position="63"/>
    </location>
</feature>
<feature type="compositionally biased region" description="Basic and acidic residues" evidence="5">
    <location>
        <begin position="155"/>
        <end position="164"/>
    </location>
</feature>
<feature type="compositionally biased region" description="Acidic residues" evidence="5">
    <location>
        <begin position="165"/>
        <end position="175"/>
    </location>
</feature>
<feature type="compositionally biased region" description="Basic residues" evidence="5">
    <location>
        <begin position="191"/>
        <end position="208"/>
    </location>
</feature>
<feature type="compositionally biased region" description="Basic and acidic residues" evidence="5">
    <location>
        <begin position="209"/>
        <end position="231"/>
    </location>
</feature>
<feature type="modified residue" description="Phosphoserine" evidence="2">
    <location>
        <position position="177"/>
    </location>
</feature>
<comment type="function">
    <text>Negative regulator of transcription elongation.</text>
</comment>
<comment type="subunit">
    <text evidence="1">Interacts with the RNA polymerase RPB1 subunit and specifically with the trimethylated H3 histone H3K4me3.</text>
</comment>
<comment type="subcellular location">
    <subcellularLocation>
        <location evidence="4">Nucleus</location>
    </subcellularLocation>
</comment>
<comment type="domain">
    <text>The PHD domain is involved in the binding to H3K4me3.</text>
</comment>
<comment type="similarity">
    <text evidence="6">Belongs to the BYE1 family.</text>
</comment>
<organism>
    <name type="scientific">Saccharomyces cerevisiae (strain YJM789)</name>
    <name type="common">Baker's yeast</name>
    <dbReference type="NCBI Taxonomy" id="307796"/>
    <lineage>
        <taxon>Eukaryota</taxon>
        <taxon>Fungi</taxon>
        <taxon>Dikarya</taxon>
        <taxon>Ascomycota</taxon>
        <taxon>Saccharomycotina</taxon>
        <taxon>Saccharomycetes</taxon>
        <taxon>Saccharomycetales</taxon>
        <taxon>Saccharomycetaceae</taxon>
        <taxon>Saccharomyces</taxon>
    </lineage>
</organism>
<sequence>MSVRTSSRSNKGQNKYIEYLLQEETEAPKKKRTKKKVDSATEKNKKSDSSQEPRKDTENVRTDEVDEADEGYVRCLCGANNENYDAAEYSHGDMVQCDGCDTWQHIKCMTDGKDTIDGLMSEDSKYYCELCDPSLYAHLETSKEAEVSEDEDYHDDVYKPVNDHDDNDADVFLDEESPRKRKRSPDSAKGIHIKSKQVKKSNGSKKRNKSIDAAKSDTAENEMPTRKDFESEKEHKLRYNAEKMFSTLFSKFIVPETIEAKLYELPDGKDVISISQEFAHNLEEELYKACLNIEFGTLDKIYTEKVRSLYSNLKDKKNLELKAHVVEGKLPLNKLVNMNASELANPDLQEFKEKRDKVILENFIVEVPDKPMYVKTHKGDELIEDIAEPQEDILYSKDSIRLHNIDSIDSDKSKIEQTHAISKEPSPSTIINEESLNCAFLYPGLGLEFTGYLNYIGVSQKLRRDIFKEAIGDGKLYVEGRLPTTTAAPYLKEISCSRAILVYQLFPSNDSESKTTFADVVDSLENKGRIAGIKPKTRYEKDFYIVPSKGGEIPEILKDILGSHNDERSERFSRMKSDERTLFAFVVVKQEFIH</sequence>
<accession>A6ZZW1</accession>
<reference key="1">
    <citation type="journal article" date="2007" name="Proc. Natl. Acad. Sci. U.S.A.">
        <title>Genome sequencing and comparative analysis of Saccharomyces cerevisiae strain YJM789.</title>
        <authorList>
            <person name="Wei W."/>
            <person name="McCusker J.H."/>
            <person name="Hyman R.W."/>
            <person name="Jones T."/>
            <person name="Ning Y."/>
            <person name="Cao Z."/>
            <person name="Gu Z."/>
            <person name="Bruno D."/>
            <person name="Miranda M."/>
            <person name="Nguyen M."/>
            <person name="Wilhelmy J."/>
            <person name="Komp C."/>
            <person name="Tamse R."/>
            <person name="Wang X."/>
            <person name="Jia P."/>
            <person name="Luedi P."/>
            <person name="Oefner P.J."/>
            <person name="David L."/>
            <person name="Dietrich F.S."/>
            <person name="Li Y."/>
            <person name="Davis R.W."/>
            <person name="Steinmetz L.M."/>
        </authorList>
    </citation>
    <scope>NUCLEOTIDE SEQUENCE [LARGE SCALE GENOMIC DNA]</scope>
    <source>
        <strain>YJM789</strain>
    </source>
</reference>
<keyword id="KW-0479">Metal-binding</keyword>
<keyword id="KW-0539">Nucleus</keyword>
<keyword id="KW-0597">Phosphoprotein</keyword>
<keyword id="KW-0678">Repressor</keyword>
<keyword id="KW-0804">Transcription</keyword>
<keyword id="KW-0805">Transcription regulation</keyword>
<keyword id="KW-0862">Zinc</keyword>
<keyword id="KW-0863">Zinc-finger</keyword>
<name>BYE1_YEAS7</name>